<sequence length="156" mass="18045">MSVVLDTPVAVRRTAMDLLARREHGRVELTRKLRQRGATDELIELALDRLAEEGLLSEARYLESFIRYRSNAGYGPARIREELGQRGLNRGDVDQALRDCGVNWAERLQDAWQRKYAGQRPHDPRSRAQQTRFLAYRGFPMDMIGRLLSGRDLDDY</sequence>
<gene>
    <name evidence="1" type="primary">recX</name>
    <name type="ordered locus">PputW619_4029</name>
</gene>
<accession>B1JDA1</accession>
<organism>
    <name type="scientific">Pseudomonas putida (strain W619)</name>
    <dbReference type="NCBI Taxonomy" id="390235"/>
    <lineage>
        <taxon>Bacteria</taxon>
        <taxon>Pseudomonadati</taxon>
        <taxon>Pseudomonadota</taxon>
        <taxon>Gammaproteobacteria</taxon>
        <taxon>Pseudomonadales</taxon>
        <taxon>Pseudomonadaceae</taxon>
        <taxon>Pseudomonas</taxon>
    </lineage>
</organism>
<reference key="1">
    <citation type="submission" date="2008-02" db="EMBL/GenBank/DDBJ databases">
        <title>Complete sequence of Pseudomonas putida W619.</title>
        <authorList>
            <person name="Copeland A."/>
            <person name="Lucas S."/>
            <person name="Lapidus A."/>
            <person name="Barry K."/>
            <person name="Detter J.C."/>
            <person name="Glavina del Rio T."/>
            <person name="Dalin E."/>
            <person name="Tice H."/>
            <person name="Pitluck S."/>
            <person name="Chain P."/>
            <person name="Malfatti S."/>
            <person name="Shin M."/>
            <person name="Vergez L."/>
            <person name="Schmutz J."/>
            <person name="Larimer F."/>
            <person name="Land M."/>
            <person name="Hauser L."/>
            <person name="Kyrpides N."/>
            <person name="Kim E."/>
            <person name="Taghavi S."/>
            <person name="Vangronsveld D."/>
            <person name="van der Lelie D."/>
            <person name="Richardson P."/>
        </authorList>
    </citation>
    <scope>NUCLEOTIDE SEQUENCE [LARGE SCALE GENOMIC DNA]</scope>
    <source>
        <strain>W619</strain>
    </source>
</reference>
<comment type="function">
    <text evidence="1">Modulates RecA activity.</text>
</comment>
<comment type="subcellular location">
    <subcellularLocation>
        <location evidence="1">Cytoplasm</location>
    </subcellularLocation>
</comment>
<comment type="similarity">
    <text evidence="1">Belongs to the RecX family.</text>
</comment>
<feature type="chain" id="PRO_1000137184" description="Regulatory protein RecX">
    <location>
        <begin position="1"/>
        <end position="156"/>
    </location>
</feature>
<keyword id="KW-0963">Cytoplasm</keyword>
<dbReference type="EMBL" id="CP000949">
    <property type="protein sequence ID" value="ACA74509.1"/>
    <property type="molecule type" value="Genomic_DNA"/>
</dbReference>
<dbReference type="SMR" id="B1JDA1"/>
<dbReference type="STRING" id="390235.PputW619_4029"/>
<dbReference type="KEGG" id="ppw:PputW619_4029"/>
<dbReference type="eggNOG" id="COG2137">
    <property type="taxonomic scope" value="Bacteria"/>
</dbReference>
<dbReference type="HOGENOM" id="CLU_066607_3_2_6"/>
<dbReference type="OrthoDB" id="7066780at2"/>
<dbReference type="GO" id="GO:0005737">
    <property type="term" value="C:cytoplasm"/>
    <property type="evidence" value="ECO:0007669"/>
    <property type="project" value="UniProtKB-SubCell"/>
</dbReference>
<dbReference type="GO" id="GO:0006282">
    <property type="term" value="P:regulation of DNA repair"/>
    <property type="evidence" value="ECO:0007669"/>
    <property type="project" value="UniProtKB-UniRule"/>
</dbReference>
<dbReference type="Gene3D" id="1.10.10.10">
    <property type="entry name" value="Winged helix-like DNA-binding domain superfamily/Winged helix DNA-binding domain"/>
    <property type="match status" value="3"/>
</dbReference>
<dbReference type="HAMAP" id="MF_01114">
    <property type="entry name" value="RecX"/>
    <property type="match status" value="1"/>
</dbReference>
<dbReference type="InterPro" id="IPR053926">
    <property type="entry name" value="RecX_HTH_1st"/>
</dbReference>
<dbReference type="InterPro" id="IPR053924">
    <property type="entry name" value="RecX_HTH_2nd"/>
</dbReference>
<dbReference type="InterPro" id="IPR053925">
    <property type="entry name" value="RecX_HTH_3rd"/>
</dbReference>
<dbReference type="InterPro" id="IPR003783">
    <property type="entry name" value="Regulatory_RecX"/>
</dbReference>
<dbReference type="InterPro" id="IPR036388">
    <property type="entry name" value="WH-like_DNA-bd_sf"/>
</dbReference>
<dbReference type="NCBIfam" id="NF001054">
    <property type="entry name" value="PRK00117.2-1"/>
    <property type="match status" value="1"/>
</dbReference>
<dbReference type="PANTHER" id="PTHR33602">
    <property type="entry name" value="REGULATORY PROTEIN RECX FAMILY PROTEIN"/>
    <property type="match status" value="1"/>
</dbReference>
<dbReference type="PANTHER" id="PTHR33602:SF1">
    <property type="entry name" value="REGULATORY PROTEIN RECX FAMILY PROTEIN"/>
    <property type="match status" value="1"/>
</dbReference>
<dbReference type="Pfam" id="PF21982">
    <property type="entry name" value="RecX_HTH1"/>
    <property type="match status" value="1"/>
</dbReference>
<dbReference type="Pfam" id="PF02631">
    <property type="entry name" value="RecX_HTH2"/>
    <property type="match status" value="1"/>
</dbReference>
<dbReference type="Pfam" id="PF21981">
    <property type="entry name" value="RecX_HTH3"/>
    <property type="match status" value="1"/>
</dbReference>
<protein>
    <recommendedName>
        <fullName evidence="1">Regulatory protein RecX</fullName>
    </recommendedName>
</protein>
<evidence type="ECO:0000255" key="1">
    <source>
        <dbReference type="HAMAP-Rule" id="MF_01114"/>
    </source>
</evidence>
<proteinExistence type="inferred from homology"/>
<name>RECX_PSEPW</name>